<evidence type="ECO:0000305" key="1"/>
<feature type="chain" id="PRO_0000222664" description="Non-structural protein NS1">
    <location>
        <begin position="1"/>
        <end position="552"/>
    </location>
</feature>
<proteinExistence type="inferred from homology"/>
<reference key="1">
    <citation type="journal article" date="1993" name="Virology">
        <title>High-sequence conservation among the United States bluetongue viruses cognate M2 genes which encode the nonstructural NS1 tubule protein.</title>
        <authorList>
            <person name="Hwang G.-Y."/>
            <person name="Chiou J.-F."/>
            <person name="Yang Y.-Y."/>
            <person name="Li J.K.-K."/>
        </authorList>
    </citation>
    <scope>NUCLEOTIDE SEQUENCE</scope>
</reference>
<gene>
    <name type="primary">Segment-5</name>
    <name type="synonym">M2</name>
</gene>
<dbReference type="EMBL" id="M97680">
    <property type="status" value="NOT_ANNOTATED_CDS"/>
    <property type="molecule type" value="Unassigned_DNA"/>
</dbReference>
<dbReference type="PIR" id="A44277">
    <property type="entry name" value="A44277"/>
</dbReference>
<dbReference type="SMR" id="P35931"/>
<dbReference type="InterPro" id="IPR002630">
    <property type="entry name" value="Orbi_NS1"/>
</dbReference>
<dbReference type="Pfam" id="PF01718">
    <property type="entry name" value="Orbi_NS1"/>
    <property type="match status" value="1"/>
</dbReference>
<comment type="similarity">
    <text evidence="1">Belongs to the orbivirus non-structural protein NS1 family.</text>
</comment>
<sequence length="552" mass="64546">MERFLRKYNISGDYANATRTFLAISPQWTCSHLKRNCLFNGMCVKQNFERAMIAATDAEEPAKAYKLVELAKEAMYDRETVWLQCFKSFSQPYEEDVEGKMKRCGAQLLEDYRKSGMMDEAVKQSALANSERVRLDDSLSAMPYIYVPIKEGQIVEPTFISRYRQIAYYFHNPDAADDWIDPNLFGIRGQHNQIQREVERQINTCPYTGYRGRVFQVMFLPIQLINFLRMDDFAKHFNRYASMAIQQYLRVGYAEEIRYVQQLFGRVPTGEFPLHQMMLMRRDFPTRDRSIVEARVRRSGDENWQSWLLPMIIIREGLDHQDRWEWFIDYMDRKHTCQLCYLKHSKQIPTCSVIDVRASELTGCSPFKMVKIEEHVGNDSVFKTKLVRDEQIGRIGDHYYTTNCYTGAEALVTTAIHIHRWIRGSGIWNDEGWQEGIFMLGRVLLRWELTKVQRSALLRLFCFVCYGYAPRADGTIPDWNNLGNFLDIILKGPELSEDEDERAYATMFEMVRCIITLCYAEKVHFAGSAAPACESGEVINLAARMSQMWMEY</sequence>
<accession>P35931</accession>
<organismHost>
    <name type="scientific">Antilocapra americana</name>
    <name type="common">Pronghorn</name>
    <dbReference type="NCBI Taxonomy" id="9891"/>
</organismHost>
<organismHost>
    <name type="scientific">Bos taurus</name>
    <name type="common">Bovine</name>
    <dbReference type="NCBI Taxonomy" id="9913"/>
</organismHost>
<organismHost>
    <name type="scientific">Capra hircus</name>
    <name type="common">Goat</name>
    <dbReference type="NCBI Taxonomy" id="9925"/>
</organismHost>
<organismHost>
    <name type="scientific">Culicoides variipennis</name>
    <name type="common">Biting midge</name>
    <dbReference type="NCBI Taxonomy" id="46212"/>
</organismHost>
<organismHost>
    <name type="scientific">Ovis aries</name>
    <name type="common">Sheep</name>
    <dbReference type="NCBI Taxonomy" id="9940"/>
</organismHost>
<name>VNS1_BTV2A</name>
<organism>
    <name type="scientific">Bluetongue virus 2 (isolate USA)</name>
    <name type="common">BTV 2</name>
    <dbReference type="NCBI Taxonomy" id="10907"/>
    <lineage>
        <taxon>Viruses</taxon>
        <taxon>Riboviria</taxon>
        <taxon>Orthornavirae</taxon>
        <taxon>Duplornaviricota</taxon>
        <taxon>Resentoviricetes</taxon>
        <taxon>Reovirales</taxon>
        <taxon>Sedoreoviridae</taxon>
        <taxon>Orbivirus</taxon>
        <taxon>Bluetongue virus</taxon>
    </lineage>
</organism>
<protein>
    <recommendedName>
        <fullName>Non-structural protein NS1</fullName>
    </recommendedName>
</protein>